<keyword id="KW-0560">Oxidoreductase</keyword>
<keyword id="KW-0819">tRNA processing</keyword>
<accession>A9N5Q7</accession>
<sequence length="350" mass="39875">MPVLHNRISNDELKAKMLAESEPRTTISFYKYFTIASPQQTRDALYQVFTALDVFGRVYLAYEGINAQISVPQSKVETFRQQLYTFDPALDGLRLNIALEDDGKSFWVLRMKVRDRIVADGIDDPSFDASNVGDYLKAADVNAMLDDPDAVFIDMRNHYEYEVGHFENALEIPADTFREQLPKAVEMLREHADKKIVMYCTGGIRCEKASAWMKHNGFNKVWHIEGGIIEYARRARAQGLPVRFIGKNFVFDERMGERISDEVIAHCHQCGAPCDSHTNCKNDGCHLLFIQCPQCASKFNGCCSEQCCEELALPEEEQRRRRAGRENGNKIFNKSRGRLNSKLSIPDPAE</sequence>
<reference key="1">
    <citation type="submission" date="2007-11" db="EMBL/GenBank/DDBJ databases">
        <authorList>
            <consortium name="The Salmonella enterica serovar Paratyphi B Genome Sequencing Project"/>
            <person name="McClelland M."/>
            <person name="Sanderson E.K."/>
            <person name="Porwollik S."/>
            <person name="Spieth J."/>
            <person name="Clifton W.S."/>
            <person name="Fulton R."/>
            <person name="Cordes M."/>
            <person name="Wollam A."/>
            <person name="Shah N."/>
            <person name="Pepin K."/>
            <person name="Bhonagiri V."/>
            <person name="Nash W."/>
            <person name="Johnson M."/>
            <person name="Thiruvilangam P."/>
            <person name="Wilson R."/>
        </authorList>
    </citation>
    <scope>NUCLEOTIDE SEQUENCE [LARGE SCALE GENOMIC DNA]</scope>
    <source>
        <strain>ATCC BAA-1250 / SPB7</strain>
    </source>
</reference>
<dbReference type="EC" id="1.14.-.-" evidence="1"/>
<dbReference type="EMBL" id="CP000886">
    <property type="protein sequence ID" value="ABX67757.1"/>
    <property type="molecule type" value="Genomic_DNA"/>
</dbReference>
<dbReference type="RefSeq" id="WP_001144643.1">
    <property type="nucleotide sequence ID" value="NC_010102.1"/>
</dbReference>
<dbReference type="SMR" id="A9N5Q7"/>
<dbReference type="KEGG" id="spq:SPAB_02375"/>
<dbReference type="PATRIC" id="fig|1016998.12.peg.2247"/>
<dbReference type="HOGENOM" id="CLU_038878_1_1_6"/>
<dbReference type="BioCyc" id="SENT1016998:SPAB_RS09675-MONOMER"/>
<dbReference type="Proteomes" id="UP000008556">
    <property type="component" value="Chromosome"/>
</dbReference>
<dbReference type="GO" id="GO:0016705">
    <property type="term" value="F:oxidoreductase activity, acting on paired donors, with incorporation or reduction of molecular oxygen"/>
    <property type="evidence" value="ECO:0007669"/>
    <property type="project" value="UniProtKB-UniRule"/>
</dbReference>
<dbReference type="GO" id="GO:0006400">
    <property type="term" value="P:tRNA modification"/>
    <property type="evidence" value="ECO:0007669"/>
    <property type="project" value="UniProtKB-UniRule"/>
</dbReference>
<dbReference type="CDD" id="cd01518">
    <property type="entry name" value="RHOD_YceA"/>
    <property type="match status" value="1"/>
</dbReference>
<dbReference type="Gene3D" id="3.30.70.100">
    <property type="match status" value="1"/>
</dbReference>
<dbReference type="Gene3D" id="3.40.250.10">
    <property type="entry name" value="Rhodanese-like domain"/>
    <property type="match status" value="1"/>
</dbReference>
<dbReference type="HAMAP" id="MF_00469">
    <property type="entry name" value="TrhO"/>
    <property type="match status" value="1"/>
</dbReference>
<dbReference type="InterPro" id="IPR001763">
    <property type="entry name" value="Rhodanese-like_dom"/>
</dbReference>
<dbReference type="InterPro" id="IPR036873">
    <property type="entry name" value="Rhodanese-like_dom_sf"/>
</dbReference>
<dbReference type="InterPro" id="IPR022111">
    <property type="entry name" value="Rhodanese_C"/>
</dbReference>
<dbReference type="InterPro" id="IPR020936">
    <property type="entry name" value="TrhO"/>
</dbReference>
<dbReference type="InterPro" id="IPR040503">
    <property type="entry name" value="TRHO_N"/>
</dbReference>
<dbReference type="NCBIfam" id="NF001133">
    <property type="entry name" value="PRK00142.1-1"/>
    <property type="match status" value="1"/>
</dbReference>
<dbReference type="PANTHER" id="PTHR43846:SF1">
    <property type="entry name" value="TRNA URIDINE(34) HYDROXYLASE"/>
    <property type="match status" value="1"/>
</dbReference>
<dbReference type="PANTHER" id="PTHR43846">
    <property type="entry name" value="UPF0176 PROTEIN YCEA"/>
    <property type="match status" value="1"/>
</dbReference>
<dbReference type="Pfam" id="PF00581">
    <property type="entry name" value="Rhodanese"/>
    <property type="match status" value="1"/>
</dbReference>
<dbReference type="Pfam" id="PF12368">
    <property type="entry name" value="Rhodanese_C"/>
    <property type="match status" value="1"/>
</dbReference>
<dbReference type="Pfam" id="PF17773">
    <property type="entry name" value="UPF0176_N"/>
    <property type="match status" value="1"/>
</dbReference>
<dbReference type="SMART" id="SM00450">
    <property type="entry name" value="RHOD"/>
    <property type="match status" value="1"/>
</dbReference>
<dbReference type="SUPFAM" id="SSF52821">
    <property type="entry name" value="Rhodanese/Cell cycle control phosphatase"/>
    <property type="match status" value="1"/>
</dbReference>
<dbReference type="PROSITE" id="PS50206">
    <property type="entry name" value="RHODANESE_3"/>
    <property type="match status" value="1"/>
</dbReference>
<comment type="function">
    <text evidence="1">Catalyzes oxygen-dependent 5-hydroxyuridine (ho5U) modification at position 34 in tRNAs.</text>
</comment>
<comment type="catalytic activity">
    <reaction evidence="1">
        <text>uridine(34) in tRNA + AH2 + O2 = 5-hydroxyuridine(34) in tRNA + A + H2O</text>
        <dbReference type="Rhea" id="RHEA:64224"/>
        <dbReference type="Rhea" id="RHEA-COMP:11727"/>
        <dbReference type="Rhea" id="RHEA-COMP:13381"/>
        <dbReference type="ChEBI" id="CHEBI:13193"/>
        <dbReference type="ChEBI" id="CHEBI:15377"/>
        <dbReference type="ChEBI" id="CHEBI:15379"/>
        <dbReference type="ChEBI" id="CHEBI:17499"/>
        <dbReference type="ChEBI" id="CHEBI:65315"/>
        <dbReference type="ChEBI" id="CHEBI:136877"/>
    </reaction>
</comment>
<comment type="similarity">
    <text evidence="1">Belongs to the TrhO family.</text>
</comment>
<evidence type="ECO:0000255" key="1">
    <source>
        <dbReference type="HAMAP-Rule" id="MF_00469"/>
    </source>
</evidence>
<evidence type="ECO:0000256" key="2">
    <source>
        <dbReference type="SAM" id="MobiDB-lite"/>
    </source>
</evidence>
<feature type="chain" id="PRO_1000081195" description="tRNA uridine(34) hydroxylase">
    <location>
        <begin position="1"/>
        <end position="350"/>
    </location>
</feature>
<feature type="domain" description="Rhodanese" evidence="1">
    <location>
        <begin position="146"/>
        <end position="240"/>
    </location>
</feature>
<feature type="region of interest" description="Disordered" evidence="2">
    <location>
        <begin position="319"/>
        <end position="350"/>
    </location>
</feature>
<feature type="compositionally biased region" description="Basic and acidic residues" evidence="2">
    <location>
        <begin position="319"/>
        <end position="328"/>
    </location>
</feature>
<feature type="active site" description="Cysteine persulfide intermediate" evidence="1">
    <location>
        <position position="200"/>
    </location>
</feature>
<name>TRHO_SALPB</name>
<gene>
    <name evidence="1" type="primary">trhO</name>
    <name type="synonym">yceA</name>
    <name type="ordered locus">SPAB_02375</name>
</gene>
<proteinExistence type="inferred from homology"/>
<protein>
    <recommendedName>
        <fullName evidence="1">tRNA uridine(34) hydroxylase</fullName>
        <ecNumber evidence="1">1.14.-.-</ecNumber>
    </recommendedName>
    <alternativeName>
        <fullName evidence="1">tRNA hydroxylation protein O</fullName>
    </alternativeName>
</protein>
<organism>
    <name type="scientific">Salmonella paratyphi B (strain ATCC BAA-1250 / SPB7)</name>
    <dbReference type="NCBI Taxonomy" id="1016998"/>
    <lineage>
        <taxon>Bacteria</taxon>
        <taxon>Pseudomonadati</taxon>
        <taxon>Pseudomonadota</taxon>
        <taxon>Gammaproteobacteria</taxon>
        <taxon>Enterobacterales</taxon>
        <taxon>Enterobacteriaceae</taxon>
        <taxon>Salmonella</taxon>
    </lineage>
</organism>